<accession>Q5F3X4</accession>
<proteinExistence type="evidence at transcript level"/>
<sequence>MDTDLYDEFGNYIGPELDSDDEDDELGRESKELDELEDDDDDDDMGDHDEDHPGMEVVLHEDKKYYPTAEEVYGPEVETIVQEEDTQPLTEPIIKPVKTKKFSLMEQTLPVTVYEMDFLADLMDNSELIRNVTLCGHLHHGKTCFVDCLIEQTHPEIRKRYDQDLCYTDILFTEQERGVGIKSTPVTIVLPDTKGKSFLFNIIDTPGHVNFSDEVTAGLRISDGVVLFIDAAEGVMLNTERLIKHAVQERLAVTVCINKIDRLILELKLPPTDAYYKLRHIVDEVNGLISMYSTDENLVLSPLLGNVCFSSSQYSICFTLGSFAKIYADTYGDINYQEFAKRLWGDIYFNPKTRKFTKKAPTSSSQRSFVEFILEPLYKILAQVVGDVDTTLPRTLDELGIHLTKEELKLNIRPLLRLVCKKFFGEFTGFVDMCVQHIPSPKVGAKTKIEHTYTGGVDSDLGEAMSECDPDGPLMCHTTKMYSTDDGVQFHAFGRVLSGTIHAGQPVKVLGENYTLEDEEDSQICTVGRLWISVARYHIEVNRVPAGNWVLIEGVDQPIVKTATVTEPRGNEEAQIFRPLKFNTTSVIKIAVEPVNPSELPKMLDGLRKVNKSYPSLTTKVEESGEHVILGTGELYLDCVMHDLRKMYSEIDIKVADPVVTFCETVVETSSLKCFAETPNKKNKITMIAEPLEKGLAEDIENEVVQITWNRKKLGEFFQTKYDWDLLAARSIWAFGPDATGPNILVDDTLPSEVDKALLGSVKDSIVQGFQWGTREGPLCDELIRNVKFKILDAVIAQEPLHRGGGQIIPTARRVVYSAFLMATPRLMEPYYFVEVQAPADCVSAVYTVLARRRGHVTQDAPIPGSPLYTIKAFIPAIDSFGFETDLRTHTQGQAFSLSVFHHWQIVPGDPLDKSIVIRPLEPQPAPHLAREFMIKTRRRKGLSEDVSISKFFDDPMLLELAKQDVVLNYPM</sequence>
<dbReference type="EMBL" id="AJ851526">
    <property type="protein sequence ID" value="CAH65160.1"/>
    <property type="molecule type" value="mRNA"/>
</dbReference>
<dbReference type="RefSeq" id="NP_001026672.1">
    <property type="nucleotide sequence ID" value="NM_001031501.1"/>
</dbReference>
<dbReference type="RefSeq" id="XP_046760323.1">
    <property type="nucleotide sequence ID" value="XM_046904367.1"/>
</dbReference>
<dbReference type="RefSeq" id="XP_046789383.1">
    <property type="nucleotide sequence ID" value="XM_046933427.1"/>
</dbReference>
<dbReference type="RefSeq" id="XP_046789384.1">
    <property type="nucleotide sequence ID" value="XM_046933428.1"/>
</dbReference>
<dbReference type="SMR" id="Q5F3X4"/>
<dbReference type="FunCoup" id="Q5F3X4">
    <property type="interactions" value="3576"/>
</dbReference>
<dbReference type="STRING" id="9031.ENSGALP00000064066"/>
<dbReference type="PaxDb" id="9031-ENSGALP00000001456"/>
<dbReference type="GeneID" id="428281"/>
<dbReference type="KEGG" id="gga:428281"/>
<dbReference type="CTD" id="9343"/>
<dbReference type="VEuPathDB" id="HostDB:geneid_428281"/>
<dbReference type="eggNOG" id="KOG0468">
    <property type="taxonomic scope" value="Eukaryota"/>
</dbReference>
<dbReference type="HOGENOM" id="CLU_002794_11_2_1"/>
<dbReference type="InParanoid" id="Q5F3X4"/>
<dbReference type="OMA" id="YIFRPIR"/>
<dbReference type="OrthoDB" id="364892at2759"/>
<dbReference type="PhylomeDB" id="Q5F3X4"/>
<dbReference type="Reactome" id="R-GGA-72163">
    <property type="pathway name" value="mRNA Splicing - Major Pathway"/>
</dbReference>
<dbReference type="Reactome" id="R-GGA-72165">
    <property type="pathway name" value="mRNA Splicing - Minor Pathway"/>
</dbReference>
<dbReference type="PRO" id="PR:Q5F3X4"/>
<dbReference type="Proteomes" id="UP000000539">
    <property type="component" value="Chromosome 27"/>
</dbReference>
<dbReference type="Bgee" id="ENSGALG00000000988">
    <property type="expression patterns" value="Expressed in testis and 13 other cell types or tissues"/>
</dbReference>
<dbReference type="GO" id="GO:0005829">
    <property type="term" value="C:cytosol"/>
    <property type="evidence" value="ECO:0000318"/>
    <property type="project" value="GO_Central"/>
</dbReference>
<dbReference type="GO" id="GO:0005634">
    <property type="term" value="C:nucleus"/>
    <property type="evidence" value="ECO:0000250"/>
    <property type="project" value="UniProtKB"/>
</dbReference>
<dbReference type="GO" id="GO:0071007">
    <property type="term" value="C:U2-type catalytic step 2 spliceosome"/>
    <property type="evidence" value="ECO:0000250"/>
    <property type="project" value="UniProtKB"/>
</dbReference>
<dbReference type="GO" id="GO:0071005">
    <property type="term" value="C:U2-type precatalytic spliceosome"/>
    <property type="evidence" value="ECO:0000250"/>
    <property type="project" value="UniProtKB"/>
</dbReference>
<dbReference type="GO" id="GO:0046540">
    <property type="term" value="C:U4/U6 x U5 tri-snRNP complex"/>
    <property type="evidence" value="ECO:0000318"/>
    <property type="project" value="GO_Central"/>
</dbReference>
<dbReference type="GO" id="GO:0005525">
    <property type="term" value="F:GTP binding"/>
    <property type="evidence" value="ECO:0007669"/>
    <property type="project" value="UniProtKB-KW"/>
</dbReference>
<dbReference type="GO" id="GO:0003924">
    <property type="term" value="F:GTPase activity"/>
    <property type="evidence" value="ECO:0000318"/>
    <property type="project" value="GO_Central"/>
</dbReference>
<dbReference type="GO" id="GO:0030623">
    <property type="term" value="F:U5 snRNA binding"/>
    <property type="evidence" value="ECO:0000318"/>
    <property type="project" value="GO_Central"/>
</dbReference>
<dbReference type="GO" id="GO:0000398">
    <property type="term" value="P:mRNA splicing, via spliceosome"/>
    <property type="evidence" value="ECO:0000250"/>
    <property type="project" value="UniProtKB"/>
</dbReference>
<dbReference type="CDD" id="cd04098">
    <property type="entry name" value="eEF2_C_snRNP"/>
    <property type="match status" value="1"/>
</dbReference>
<dbReference type="CDD" id="cd04090">
    <property type="entry name" value="EF2_II_snRNP"/>
    <property type="match status" value="1"/>
</dbReference>
<dbReference type="CDD" id="cd01683">
    <property type="entry name" value="EF2_IV_snRNP"/>
    <property type="match status" value="1"/>
</dbReference>
<dbReference type="CDD" id="cd16264">
    <property type="entry name" value="snRNP_III"/>
    <property type="match status" value="1"/>
</dbReference>
<dbReference type="CDD" id="cd04167">
    <property type="entry name" value="Snu114p"/>
    <property type="match status" value="1"/>
</dbReference>
<dbReference type="FunFam" id="3.30.70.240:FF:000004">
    <property type="entry name" value="116 kDa U5 small nuclear ribonucleoprotein"/>
    <property type="match status" value="1"/>
</dbReference>
<dbReference type="FunFam" id="2.40.30.10:FF:000029">
    <property type="entry name" value="116 kDa U5 small nuclear ribonucleoprotein component"/>
    <property type="match status" value="1"/>
</dbReference>
<dbReference type="FunFam" id="3.30.230.10:FF:000009">
    <property type="entry name" value="116 kDa U5 small nuclear ribonucleoprotein component"/>
    <property type="match status" value="1"/>
</dbReference>
<dbReference type="FunFam" id="3.40.50.300:FF:000574">
    <property type="entry name" value="116 kDa U5 small nuclear ribonucleoprotein component"/>
    <property type="match status" value="1"/>
</dbReference>
<dbReference type="FunFam" id="3.90.1430.10:FF:000001">
    <property type="entry name" value="116 kDa U5 small nuclear ribonucleoprotein component"/>
    <property type="match status" value="1"/>
</dbReference>
<dbReference type="FunFam" id="3.30.70.870:FF:000002">
    <property type="entry name" value="Translation elongation factor 2"/>
    <property type="match status" value="1"/>
</dbReference>
<dbReference type="Gene3D" id="3.30.230.10">
    <property type="match status" value="1"/>
</dbReference>
<dbReference type="Gene3D" id="3.30.70.240">
    <property type="match status" value="1"/>
</dbReference>
<dbReference type="Gene3D" id="3.30.70.870">
    <property type="entry name" value="Elongation Factor G (Translational Gtpase), domain 3"/>
    <property type="match status" value="1"/>
</dbReference>
<dbReference type="Gene3D" id="3.40.50.300">
    <property type="entry name" value="P-loop containing nucleotide triphosphate hydrolases"/>
    <property type="match status" value="1"/>
</dbReference>
<dbReference type="Gene3D" id="2.40.30.10">
    <property type="entry name" value="Translation factors"/>
    <property type="match status" value="1"/>
</dbReference>
<dbReference type="Gene3D" id="3.90.1430.10">
    <property type="entry name" value="Yeast translation eEF2 (G' domain)"/>
    <property type="match status" value="1"/>
</dbReference>
<dbReference type="InterPro" id="IPR041095">
    <property type="entry name" value="EFG_II"/>
</dbReference>
<dbReference type="InterPro" id="IPR035647">
    <property type="entry name" value="EFG_III/V"/>
</dbReference>
<dbReference type="InterPro" id="IPR000640">
    <property type="entry name" value="EFG_V-like"/>
</dbReference>
<dbReference type="InterPro" id="IPR004161">
    <property type="entry name" value="EFTu-like_2"/>
</dbReference>
<dbReference type="InterPro" id="IPR031950">
    <property type="entry name" value="EFTUD2_N"/>
</dbReference>
<dbReference type="InterPro" id="IPR027417">
    <property type="entry name" value="P-loop_NTPase"/>
</dbReference>
<dbReference type="InterPro" id="IPR020568">
    <property type="entry name" value="Ribosomal_Su5_D2-typ_SF"/>
</dbReference>
<dbReference type="InterPro" id="IPR014721">
    <property type="entry name" value="Ribsml_uS5_D2-typ_fold_subgr"/>
</dbReference>
<dbReference type="InterPro" id="IPR005225">
    <property type="entry name" value="Small_GTP-bd"/>
</dbReference>
<dbReference type="InterPro" id="IPR044121">
    <property type="entry name" value="Snu114_GTP-bd"/>
</dbReference>
<dbReference type="InterPro" id="IPR000795">
    <property type="entry name" value="T_Tr_GTP-bd_dom"/>
</dbReference>
<dbReference type="InterPro" id="IPR009000">
    <property type="entry name" value="Transl_B-barrel_sf"/>
</dbReference>
<dbReference type="InterPro" id="IPR005517">
    <property type="entry name" value="Transl_elong_EFG/EF2_IV"/>
</dbReference>
<dbReference type="InterPro" id="IPR035655">
    <property type="entry name" value="U5-116kDa_C"/>
</dbReference>
<dbReference type="NCBIfam" id="TIGR00231">
    <property type="entry name" value="small_GTP"/>
    <property type="match status" value="1"/>
</dbReference>
<dbReference type="PANTHER" id="PTHR42908:SF6">
    <property type="entry name" value="116 KDA U5 SMALL NUCLEAR RIBONUCLEOPROTEIN COMPONENT"/>
    <property type="match status" value="1"/>
</dbReference>
<dbReference type="PANTHER" id="PTHR42908">
    <property type="entry name" value="TRANSLATION ELONGATION FACTOR-RELATED"/>
    <property type="match status" value="1"/>
</dbReference>
<dbReference type="Pfam" id="PF00679">
    <property type="entry name" value="EFG_C"/>
    <property type="match status" value="1"/>
</dbReference>
<dbReference type="Pfam" id="PF14492">
    <property type="entry name" value="EFG_III"/>
    <property type="match status" value="1"/>
</dbReference>
<dbReference type="Pfam" id="PF03764">
    <property type="entry name" value="EFG_IV"/>
    <property type="match status" value="1"/>
</dbReference>
<dbReference type="Pfam" id="PF16004">
    <property type="entry name" value="EFTUD2"/>
    <property type="match status" value="1"/>
</dbReference>
<dbReference type="Pfam" id="PF00009">
    <property type="entry name" value="GTP_EFTU"/>
    <property type="match status" value="1"/>
</dbReference>
<dbReference type="Pfam" id="PF03144">
    <property type="entry name" value="GTP_EFTU_D2"/>
    <property type="match status" value="1"/>
</dbReference>
<dbReference type="PRINTS" id="PR00315">
    <property type="entry name" value="ELONGATNFCT"/>
</dbReference>
<dbReference type="SMART" id="SM00838">
    <property type="entry name" value="EFG_C"/>
    <property type="match status" value="1"/>
</dbReference>
<dbReference type="SMART" id="SM00889">
    <property type="entry name" value="EFG_IV"/>
    <property type="match status" value="1"/>
</dbReference>
<dbReference type="SUPFAM" id="SSF54980">
    <property type="entry name" value="EF-G C-terminal domain-like"/>
    <property type="match status" value="2"/>
</dbReference>
<dbReference type="SUPFAM" id="SSF52540">
    <property type="entry name" value="P-loop containing nucleoside triphosphate hydrolases"/>
    <property type="match status" value="1"/>
</dbReference>
<dbReference type="SUPFAM" id="SSF54211">
    <property type="entry name" value="Ribosomal protein S5 domain 2-like"/>
    <property type="match status" value="1"/>
</dbReference>
<dbReference type="SUPFAM" id="SSF50447">
    <property type="entry name" value="Translation proteins"/>
    <property type="match status" value="1"/>
</dbReference>
<dbReference type="PROSITE" id="PS51722">
    <property type="entry name" value="G_TR_2"/>
    <property type="match status" value="1"/>
</dbReference>
<feature type="chain" id="PRO_0000315998" description="116 kDa U5 small nuclear ribonucleoprotein component">
    <location>
        <begin position="1"/>
        <end position="972"/>
    </location>
</feature>
<feature type="domain" description="tr-type G" evidence="3">
    <location>
        <begin position="127"/>
        <end position="409"/>
    </location>
</feature>
<feature type="region of interest" description="Disordered" evidence="4">
    <location>
        <begin position="1"/>
        <end position="53"/>
    </location>
</feature>
<feature type="compositionally biased region" description="Acidic residues" evidence="4">
    <location>
        <begin position="17"/>
        <end position="26"/>
    </location>
</feature>
<feature type="compositionally biased region" description="Acidic residues" evidence="4">
    <location>
        <begin position="34"/>
        <end position="48"/>
    </location>
</feature>
<feature type="binding site" evidence="2">
    <location>
        <begin position="136"/>
        <end position="143"/>
    </location>
    <ligand>
        <name>GTP</name>
        <dbReference type="ChEBI" id="CHEBI:37565"/>
    </ligand>
</feature>
<feature type="binding site" evidence="2">
    <location>
        <begin position="204"/>
        <end position="208"/>
    </location>
    <ligand>
        <name>GTP</name>
        <dbReference type="ChEBI" id="CHEBI:37565"/>
    </ligand>
</feature>
<feature type="binding site" evidence="2">
    <location>
        <begin position="258"/>
        <end position="261"/>
    </location>
    <ligand>
        <name>GTP</name>
        <dbReference type="ChEBI" id="CHEBI:37565"/>
    </ligand>
</feature>
<protein>
    <recommendedName>
        <fullName>116 kDa U5 small nuclear ribonucleoprotein component</fullName>
    </recommendedName>
    <alternativeName>
        <fullName>Elongation factor Tu GTP-binding domain protein 2</fullName>
    </alternativeName>
    <alternativeName>
        <fullName>U5 snRNP-specific protein, 116 kDa</fullName>
        <shortName>U5-116 kDa</shortName>
    </alternativeName>
</protein>
<evidence type="ECO:0000250" key="1">
    <source>
        <dbReference type="UniProtKB" id="Q15029"/>
    </source>
</evidence>
<evidence type="ECO:0000255" key="2"/>
<evidence type="ECO:0000255" key="3">
    <source>
        <dbReference type="PROSITE-ProRule" id="PRU01059"/>
    </source>
</evidence>
<evidence type="ECO:0000256" key="4">
    <source>
        <dbReference type="SAM" id="MobiDB-lite"/>
    </source>
</evidence>
<reference key="1">
    <citation type="journal article" date="2005" name="Genome Biol.">
        <title>Full-length cDNAs from chicken bursal lymphocytes to facilitate gene function analysis.</title>
        <authorList>
            <person name="Caldwell R.B."/>
            <person name="Kierzek A.M."/>
            <person name="Arakawa H."/>
            <person name="Bezzubov Y."/>
            <person name="Zaim J."/>
            <person name="Fiedler P."/>
            <person name="Kutter S."/>
            <person name="Blagodatski A."/>
            <person name="Kostovska D."/>
            <person name="Koter M."/>
            <person name="Plachy J."/>
            <person name="Carninci P."/>
            <person name="Hayashizaki Y."/>
            <person name="Buerstedde J.-M."/>
        </authorList>
    </citation>
    <scope>NUCLEOTIDE SEQUENCE [LARGE SCALE MRNA]</scope>
    <source>
        <strain>CB</strain>
        <tissue>Bursa of Fabricius</tissue>
    </source>
</reference>
<gene>
    <name type="primary">EFTUD2</name>
    <name type="synonym">SNRP116</name>
    <name type="ORF">RCJMB04_4m11</name>
</gene>
<keyword id="KW-0342">GTP-binding</keyword>
<keyword id="KW-0507">mRNA processing</keyword>
<keyword id="KW-0508">mRNA splicing</keyword>
<keyword id="KW-0547">Nucleotide-binding</keyword>
<keyword id="KW-0539">Nucleus</keyword>
<keyword id="KW-1185">Reference proteome</keyword>
<keyword id="KW-0747">Spliceosome</keyword>
<name>U5S1_CHICK</name>
<comment type="function">
    <text evidence="1">Required for pre-mRNA splicing as component of the spliceosome, including pre-catalytic, catalytic and post-catalytic spliceosomal complexes (By similarity). Component of the U5 snRNP and the U4/U6-U5 tri-snRNP complex, a building block of the spliceosome (By similarity). As a component of the minor spliceosome, involved in the splicing of U12-type introns in pre-mRNAs (By similarity).</text>
</comment>
<comment type="subunit">
    <text evidence="1">Component of the U5 snRNP and the U4/U6-U5 tri-snRNP complex, a building block of the spliceosome (By similarity). Component of the pre-catalytic, catalytic and post-catalytic spliceosome complexes (By similarity). Component of the minor spliceosome, which splices U12-type introns (By similarity).</text>
</comment>
<comment type="subcellular location">
    <subcellularLocation>
        <location evidence="1">Nucleus</location>
    </subcellularLocation>
</comment>
<comment type="similarity">
    <text evidence="3">Belongs to the TRAFAC class translation factor GTPase superfamily. Classic translation factor GTPase family. EF-G/EF-2 subfamily.</text>
</comment>
<organism>
    <name type="scientific">Gallus gallus</name>
    <name type="common">Chicken</name>
    <dbReference type="NCBI Taxonomy" id="9031"/>
    <lineage>
        <taxon>Eukaryota</taxon>
        <taxon>Metazoa</taxon>
        <taxon>Chordata</taxon>
        <taxon>Craniata</taxon>
        <taxon>Vertebrata</taxon>
        <taxon>Euteleostomi</taxon>
        <taxon>Archelosauria</taxon>
        <taxon>Archosauria</taxon>
        <taxon>Dinosauria</taxon>
        <taxon>Saurischia</taxon>
        <taxon>Theropoda</taxon>
        <taxon>Coelurosauria</taxon>
        <taxon>Aves</taxon>
        <taxon>Neognathae</taxon>
        <taxon>Galloanserae</taxon>
        <taxon>Galliformes</taxon>
        <taxon>Phasianidae</taxon>
        <taxon>Phasianinae</taxon>
        <taxon>Gallus</taxon>
    </lineage>
</organism>